<feature type="chain" id="PRO_0000247872" description="tRNA-guanine(15) transglycosylase">
    <location>
        <begin position="1"/>
        <end position="459"/>
    </location>
</feature>
<feature type="active site" description="Nucleophile" evidence="1">
    <location>
        <position position="90"/>
    </location>
</feature>
<feature type="binding site" evidence="1">
    <location>
        <position position="125"/>
    </location>
    <ligand>
        <name>substrate</name>
    </ligand>
</feature>
<feature type="binding site" evidence="1">
    <location>
        <position position="192"/>
    </location>
    <ligand>
        <name>substrate</name>
    </ligand>
</feature>
<feature type="binding site" evidence="1">
    <location>
        <position position="275"/>
    </location>
    <ligand>
        <name>Zn(2+)</name>
        <dbReference type="ChEBI" id="CHEBI:29105"/>
    </ligand>
</feature>
<feature type="binding site" evidence="1">
    <location>
        <position position="277"/>
    </location>
    <ligand>
        <name>Zn(2+)</name>
        <dbReference type="ChEBI" id="CHEBI:29105"/>
    </ligand>
</feature>
<feature type="binding site" evidence="1">
    <location>
        <position position="280"/>
    </location>
    <ligand>
        <name>Zn(2+)</name>
        <dbReference type="ChEBI" id="CHEBI:29105"/>
    </ligand>
</feature>
<evidence type="ECO:0000255" key="1">
    <source>
        <dbReference type="HAMAP-Rule" id="MF_01634"/>
    </source>
</evidence>
<dbReference type="EC" id="2.4.2.48" evidence="1"/>
<dbReference type="EMBL" id="AE009439">
    <property type="protein sequence ID" value="AAM01405.1"/>
    <property type="molecule type" value="Genomic_DNA"/>
</dbReference>
<dbReference type="RefSeq" id="WP_011018560.1">
    <property type="nucleotide sequence ID" value="NC_003551.1"/>
</dbReference>
<dbReference type="SMR" id="Q8TYV3"/>
<dbReference type="FunCoup" id="Q8TYV3">
    <property type="interactions" value="22"/>
</dbReference>
<dbReference type="STRING" id="190192.MK0188"/>
<dbReference type="PaxDb" id="190192-MK0188"/>
<dbReference type="EnsemblBacteria" id="AAM01405">
    <property type="protein sequence ID" value="AAM01405"/>
    <property type="gene ID" value="MK0188"/>
</dbReference>
<dbReference type="GeneID" id="1477491"/>
<dbReference type="KEGG" id="mka:MK0188"/>
<dbReference type="PATRIC" id="fig|190192.8.peg.188"/>
<dbReference type="HOGENOM" id="CLU_030083_0_0_2"/>
<dbReference type="InParanoid" id="Q8TYV3"/>
<dbReference type="OrthoDB" id="6871at2157"/>
<dbReference type="UniPathway" id="UPA00393"/>
<dbReference type="Proteomes" id="UP000001826">
    <property type="component" value="Chromosome"/>
</dbReference>
<dbReference type="GO" id="GO:0005737">
    <property type="term" value="C:cytoplasm"/>
    <property type="evidence" value="ECO:0007669"/>
    <property type="project" value="TreeGrafter"/>
</dbReference>
<dbReference type="GO" id="GO:0016763">
    <property type="term" value="F:pentosyltransferase activity"/>
    <property type="evidence" value="ECO:0007669"/>
    <property type="project" value="UniProtKB-UniRule"/>
</dbReference>
<dbReference type="GO" id="GO:0008270">
    <property type="term" value="F:zinc ion binding"/>
    <property type="evidence" value="ECO:0007669"/>
    <property type="project" value="UniProtKB-UniRule"/>
</dbReference>
<dbReference type="GO" id="GO:0002099">
    <property type="term" value="P:tRNA wobble guanine modification"/>
    <property type="evidence" value="ECO:0007669"/>
    <property type="project" value="TreeGrafter"/>
</dbReference>
<dbReference type="Gene3D" id="3.20.20.105">
    <property type="entry name" value="Queuine tRNA-ribosyltransferase-like"/>
    <property type="match status" value="1"/>
</dbReference>
<dbReference type="HAMAP" id="MF_01634">
    <property type="entry name" value="TgtA_arch"/>
    <property type="match status" value="1"/>
</dbReference>
<dbReference type="InterPro" id="IPR050076">
    <property type="entry name" value="ArchSynthase1/Queuine_TRR"/>
</dbReference>
<dbReference type="InterPro" id="IPR036511">
    <property type="entry name" value="TGT-like_sf"/>
</dbReference>
<dbReference type="InterPro" id="IPR004804">
    <property type="entry name" value="TgtA"/>
</dbReference>
<dbReference type="InterPro" id="IPR002616">
    <property type="entry name" value="tRNA_ribo_trans-like"/>
</dbReference>
<dbReference type="NCBIfam" id="TIGR00432">
    <property type="entry name" value="arcsn_tRNA_tgt"/>
    <property type="match status" value="1"/>
</dbReference>
<dbReference type="NCBIfam" id="TIGR00449">
    <property type="entry name" value="tgt_general"/>
    <property type="match status" value="1"/>
</dbReference>
<dbReference type="PANTHER" id="PTHR46499">
    <property type="entry name" value="QUEUINE TRNA-RIBOSYLTRANSFERASE"/>
    <property type="match status" value="1"/>
</dbReference>
<dbReference type="PANTHER" id="PTHR46499:SF1">
    <property type="entry name" value="QUEUINE TRNA-RIBOSYLTRANSFERASE"/>
    <property type="match status" value="1"/>
</dbReference>
<dbReference type="Pfam" id="PF01702">
    <property type="entry name" value="TGT"/>
    <property type="match status" value="1"/>
</dbReference>
<dbReference type="SUPFAM" id="SSF51713">
    <property type="entry name" value="tRNA-guanine transglycosylase"/>
    <property type="match status" value="1"/>
</dbReference>
<proteinExistence type="inferred from homology"/>
<protein>
    <recommendedName>
        <fullName evidence="1">tRNA-guanine(15) transglycosylase</fullName>
        <ecNumber evidence="1">2.4.2.48</ecNumber>
    </recommendedName>
    <alternativeName>
        <fullName evidence="1">7-cyano-7-deazaguanine tRNA-ribosyltransferase</fullName>
    </alternativeName>
    <alternativeName>
        <fullName evidence="1">Archaeal tRNA-guanine transglycosylase</fullName>
    </alternativeName>
</protein>
<reference key="1">
    <citation type="journal article" date="2002" name="Proc. Natl. Acad. Sci. U.S.A.">
        <title>The complete genome of hyperthermophile Methanopyrus kandleri AV19 and monophyly of archaeal methanogens.</title>
        <authorList>
            <person name="Slesarev A.I."/>
            <person name="Mezhevaya K.V."/>
            <person name="Makarova K.S."/>
            <person name="Polushin N.N."/>
            <person name="Shcherbinina O.V."/>
            <person name="Shakhova V.V."/>
            <person name="Belova G.I."/>
            <person name="Aravind L."/>
            <person name="Natale D.A."/>
            <person name="Rogozin I.B."/>
            <person name="Tatusov R.L."/>
            <person name="Wolf Y.I."/>
            <person name="Stetter K.O."/>
            <person name="Malykh A.G."/>
            <person name="Koonin E.V."/>
            <person name="Kozyavkin S.A."/>
        </authorList>
    </citation>
    <scope>NUCLEOTIDE SEQUENCE [LARGE SCALE GENOMIC DNA]</scope>
    <source>
        <strain>AV19 / DSM 6324 / JCM 9639 / NBRC 100938</strain>
    </source>
</reference>
<keyword id="KW-0328">Glycosyltransferase</keyword>
<keyword id="KW-0479">Metal-binding</keyword>
<keyword id="KW-1185">Reference proteome</keyword>
<keyword id="KW-0808">Transferase</keyword>
<keyword id="KW-0819">tRNA processing</keyword>
<keyword id="KW-0862">Zinc</keyword>
<comment type="function">
    <text evidence="1">Exchanges the guanine residue with 7-cyano-7-deazaguanine (preQ0) at position 15 in the dihydrouridine loop (D-loop) of archaeal tRNAs.</text>
</comment>
<comment type="catalytic activity">
    <reaction evidence="1">
        <text>guanosine(15) in tRNA + 7-cyano-7-deazaguanine = 7-cyano-7-carbaguanosine(15) in tRNA + guanine</text>
        <dbReference type="Rhea" id="RHEA:43164"/>
        <dbReference type="Rhea" id="RHEA-COMP:10371"/>
        <dbReference type="Rhea" id="RHEA-COMP:10372"/>
        <dbReference type="ChEBI" id="CHEBI:16235"/>
        <dbReference type="ChEBI" id="CHEBI:45075"/>
        <dbReference type="ChEBI" id="CHEBI:74269"/>
        <dbReference type="ChEBI" id="CHEBI:82850"/>
        <dbReference type="EC" id="2.4.2.48"/>
    </reaction>
</comment>
<comment type="cofactor">
    <cofactor evidence="1">
        <name>Zn(2+)</name>
        <dbReference type="ChEBI" id="CHEBI:29105"/>
    </cofactor>
    <text evidence="1">Binds 1 zinc ion per subunit.</text>
</comment>
<comment type="pathway">
    <text evidence="1">tRNA modification; archaeosine-tRNA biosynthesis.</text>
</comment>
<comment type="similarity">
    <text evidence="1">Belongs to the archaeosine tRNA-ribosyltransferase family.</text>
</comment>
<accession>Q8TYV3</accession>
<name>ATGT_METKA</name>
<gene>
    <name evidence="1" type="primary">tgtA</name>
    <name type="ordered locus">MK0188</name>
</gene>
<organism>
    <name type="scientific">Methanopyrus kandleri (strain AV19 / DSM 6324 / JCM 9639 / NBRC 100938)</name>
    <dbReference type="NCBI Taxonomy" id="190192"/>
    <lineage>
        <taxon>Archaea</taxon>
        <taxon>Methanobacteriati</taxon>
        <taxon>Methanobacteriota</taxon>
        <taxon>Methanomada group</taxon>
        <taxon>Methanopyri</taxon>
        <taxon>Methanopyrales</taxon>
        <taxon>Methanopyraceae</taxon>
        <taxon>Methanopyrus</taxon>
    </lineage>
</organism>
<sequence>MNVAFEVKDRDVAGRLGRLEVNGRRLKTPALLPVVNPNKPTLDPREISKLGFDGVITNAYIIRKHEHLREQALEEGVHGLLGFDGFVMTDSGSFQLAEYGDVEVSNEEIVRFQAKIGSDVGTILDVPTPPDAPRSRVERDLETTLKRAREAVELDEHPPLALTVQGSTYEDLRRLCAEKLAELPAAVYPVGGVVPLLEEYRFVDVVRVVLAAKSSLPPHRPVHLFGCGHPLAIPLAVAMGCDLFDSASYAIYARSDRYMSILGTLKLEELETFPCSCPACTRHDPDDVREMEPRERTRVLATHNLYELRRVIETTRQAIVSGELWELAESVCRAHPRAWAGMVELARRGGELERWCPAVKRSVFVCDEVSKGRPELRLYRRRLRDRFGELSGRKVVKGISRPYAEIVEWLEPWELAFADEWLGVVPGELSWSYPCHCLVEPSGDDEGEDRRRGEEGRRR</sequence>